<name>LPXA_SHIDS</name>
<gene>
    <name evidence="1" type="primary">lpxA</name>
    <name type="ordered locus">SDY_0197</name>
</gene>
<feature type="chain" id="PRO_0000302602" description="Acyl-[acyl-carrier-protein]--UDP-N-acetylglucosamine O-acyltransferase">
    <location>
        <begin position="1"/>
        <end position="262"/>
    </location>
</feature>
<dbReference type="EC" id="2.3.1.129" evidence="1"/>
<dbReference type="EMBL" id="CP000034">
    <property type="protein sequence ID" value="ABB60429.1"/>
    <property type="molecule type" value="Genomic_DNA"/>
</dbReference>
<dbReference type="RefSeq" id="WP_000565966.1">
    <property type="nucleotide sequence ID" value="NC_007606.1"/>
</dbReference>
<dbReference type="RefSeq" id="YP_401918.1">
    <property type="nucleotide sequence ID" value="NC_007606.1"/>
</dbReference>
<dbReference type="SMR" id="Q32JS8"/>
<dbReference type="STRING" id="300267.SDY_0197"/>
<dbReference type="EnsemblBacteria" id="ABB60429">
    <property type="protein sequence ID" value="ABB60429"/>
    <property type="gene ID" value="SDY_0197"/>
</dbReference>
<dbReference type="GeneID" id="93777244"/>
<dbReference type="KEGG" id="sdy:SDY_0197"/>
<dbReference type="PATRIC" id="fig|300267.13.peg.228"/>
<dbReference type="HOGENOM" id="CLU_061249_0_0_6"/>
<dbReference type="UniPathway" id="UPA00359">
    <property type="reaction ID" value="UER00477"/>
</dbReference>
<dbReference type="Proteomes" id="UP000002716">
    <property type="component" value="Chromosome"/>
</dbReference>
<dbReference type="GO" id="GO:0005737">
    <property type="term" value="C:cytoplasm"/>
    <property type="evidence" value="ECO:0007669"/>
    <property type="project" value="UniProtKB-SubCell"/>
</dbReference>
<dbReference type="GO" id="GO:0016020">
    <property type="term" value="C:membrane"/>
    <property type="evidence" value="ECO:0007669"/>
    <property type="project" value="GOC"/>
</dbReference>
<dbReference type="GO" id="GO:0008780">
    <property type="term" value="F:acyl-[acyl-carrier-protein]-UDP-N-acetylglucosamine O-acyltransferase activity"/>
    <property type="evidence" value="ECO:0007669"/>
    <property type="project" value="UniProtKB-UniRule"/>
</dbReference>
<dbReference type="GO" id="GO:0009245">
    <property type="term" value="P:lipid A biosynthetic process"/>
    <property type="evidence" value="ECO:0007669"/>
    <property type="project" value="UniProtKB-UniRule"/>
</dbReference>
<dbReference type="CDD" id="cd03351">
    <property type="entry name" value="LbH_UDP-GlcNAc_AT"/>
    <property type="match status" value="1"/>
</dbReference>
<dbReference type="FunFam" id="1.20.1180.10:FF:000001">
    <property type="entry name" value="Acyl-[acyl-carrier-protein]--UDP-N-acetylglucosamine O-acyltransferase"/>
    <property type="match status" value="1"/>
</dbReference>
<dbReference type="FunFam" id="2.160.10.10:FF:000003">
    <property type="entry name" value="Acyl-[acyl-carrier-protein]--UDP-N-acetylglucosamine O-acyltransferase"/>
    <property type="match status" value="1"/>
</dbReference>
<dbReference type="Gene3D" id="2.160.10.10">
    <property type="entry name" value="Hexapeptide repeat proteins"/>
    <property type="match status" value="1"/>
</dbReference>
<dbReference type="Gene3D" id="1.20.1180.10">
    <property type="entry name" value="Udp N-acetylglucosamine O-acyltransferase, C-terminal domain"/>
    <property type="match status" value="1"/>
</dbReference>
<dbReference type="HAMAP" id="MF_00387">
    <property type="entry name" value="LpxA"/>
    <property type="match status" value="1"/>
</dbReference>
<dbReference type="InterPro" id="IPR029098">
    <property type="entry name" value="Acetyltransf_C"/>
</dbReference>
<dbReference type="InterPro" id="IPR037157">
    <property type="entry name" value="Acetyltransf_C_sf"/>
</dbReference>
<dbReference type="InterPro" id="IPR001451">
    <property type="entry name" value="Hexapep"/>
</dbReference>
<dbReference type="InterPro" id="IPR018357">
    <property type="entry name" value="Hexapep_transf_CS"/>
</dbReference>
<dbReference type="InterPro" id="IPR010137">
    <property type="entry name" value="Lipid_A_LpxA"/>
</dbReference>
<dbReference type="InterPro" id="IPR011004">
    <property type="entry name" value="Trimer_LpxA-like_sf"/>
</dbReference>
<dbReference type="NCBIfam" id="TIGR01852">
    <property type="entry name" value="lipid_A_lpxA"/>
    <property type="match status" value="1"/>
</dbReference>
<dbReference type="NCBIfam" id="NF003657">
    <property type="entry name" value="PRK05289.1"/>
    <property type="match status" value="1"/>
</dbReference>
<dbReference type="PANTHER" id="PTHR43480">
    <property type="entry name" value="ACYL-[ACYL-CARRIER-PROTEIN]--UDP-N-ACETYLGLUCOSAMINE O-ACYLTRANSFERASE"/>
    <property type="match status" value="1"/>
</dbReference>
<dbReference type="PANTHER" id="PTHR43480:SF1">
    <property type="entry name" value="ACYL-[ACYL-CARRIER-PROTEIN]--UDP-N-ACETYLGLUCOSAMINE O-ACYLTRANSFERASE, MITOCHONDRIAL-RELATED"/>
    <property type="match status" value="1"/>
</dbReference>
<dbReference type="Pfam" id="PF13720">
    <property type="entry name" value="Acetyltransf_11"/>
    <property type="match status" value="1"/>
</dbReference>
<dbReference type="Pfam" id="PF00132">
    <property type="entry name" value="Hexapep"/>
    <property type="match status" value="2"/>
</dbReference>
<dbReference type="PIRSF" id="PIRSF000456">
    <property type="entry name" value="UDP-GlcNAc_acltr"/>
    <property type="match status" value="1"/>
</dbReference>
<dbReference type="SUPFAM" id="SSF51161">
    <property type="entry name" value="Trimeric LpxA-like enzymes"/>
    <property type="match status" value="1"/>
</dbReference>
<dbReference type="PROSITE" id="PS00101">
    <property type="entry name" value="HEXAPEP_TRANSFERASES"/>
    <property type="match status" value="2"/>
</dbReference>
<sequence length="262" mass="28080">MIDKSAFVHPTAIVEEGASIGANAHIGPFCIVGPHVEIGEGTVLKSHVVVNGHTKIGRDNEIYQFASIGEVNQDLKYAGEPTRVEIGDRNRIRESVTIHRGTVQGGGLTKVGSDNLLMINAHIAHDCTVGNRCILANNATLAGHVSVDDFAIIGGMTAVHQFCIIGAHVMVGGCSGVAQDVPPYVIAQGNHATPFGVNIEGLKRRGFSREAITAIRNAYKLIYRSGKTLDEVKPEIAELAETYPEVKAFTDFFARSTRGLIR</sequence>
<proteinExistence type="inferred from homology"/>
<organism>
    <name type="scientific">Shigella dysenteriae serotype 1 (strain Sd197)</name>
    <dbReference type="NCBI Taxonomy" id="300267"/>
    <lineage>
        <taxon>Bacteria</taxon>
        <taxon>Pseudomonadati</taxon>
        <taxon>Pseudomonadota</taxon>
        <taxon>Gammaproteobacteria</taxon>
        <taxon>Enterobacterales</taxon>
        <taxon>Enterobacteriaceae</taxon>
        <taxon>Shigella</taxon>
    </lineage>
</organism>
<keyword id="KW-0012">Acyltransferase</keyword>
<keyword id="KW-0963">Cytoplasm</keyword>
<keyword id="KW-0441">Lipid A biosynthesis</keyword>
<keyword id="KW-0444">Lipid biosynthesis</keyword>
<keyword id="KW-0443">Lipid metabolism</keyword>
<keyword id="KW-1185">Reference proteome</keyword>
<keyword id="KW-0677">Repeat</keyword>
<keyword id="KW-0808">Transferase</keyword>
<accession>Q32JS8</accession>
<protein>
    <recommendedName>
        <fullName evidence="1">Acyl-[acyl-carrier-protein]--UDP-N-acetylglucosamine O-acyltransferase</fullName>
        <shortName evidence="1">UDP-N-acetylglucosamine acyltransferase</shortName>
        <ecNumber evidence="1">2.3.1.129</ecNumber>
    </recommendedName>
</protein>
<comment type="function">
    <text evidence="1">Involved in the biosynthesis of lipid A, a phosphorylated glycolipid that anchors the lipopolysaccharide to the outer membrane of the cell.</text>
</comment>
<comment type="catalytic activity">
    <reaction evidence="1">
        <text>a (3R)-hydroxyacyl-[ACP] + UDP-N-acetyl-alpha-D-glucosamine = a UDP-3-O-[(3R)-3-hydroxyacyl]-N-acetyl-alpha-D-glucosamine + holo-[ACP]</text>
        <dbReference type="Rhea" id="RHEA:67812"/>
        <dbReference type="Rhea" id="RHEA-COMP:9685"/>
        <dbReference type="Rhea" id="RHEA-COMP:9945"/>
        <dbReference type="ChEBI" id="CHEBI:57705"/>
        <dbReference type="ChEBI" id="CHEBI:64479"/>
        <dbReference type="ChEBI" id="CHEBI:78827"/>
        <dbReference type="ChEBI" id="CHEBI:173225"/>
        <dbReference type="EC" id="2.3.1.129"/>
    </reaction>
</comment>
<comment type="pathway">
    <text evidence="1">Glycolipid biosynthesis; lipid IV(A) biosynthesis; lipid IV(A) from (3R)-3-hydroxytetradecanoyl-[acyl-carrier-protein] and UDP-N-acetyl-alpha-D-glucosamine: step 1/6.</text>
</comment>
<comment type="subunit">
    <text evidence="1">Homotrimer.</text>
</comment>
<comment type="subcellular location">
    <subcellularLocation>
        <location evidence="1">Cytoplasm</location>
    </subcellularLocation>
</comment>
<comment type="similarity">
    <text evidence="1">Belongs to the transferase hexapeptide repeat family. LpxA subfamily.</text>
</comment>
<reference key="1">
    <citation type="journal article" date="2005" name="Nucleic Acids Res.">
        <title>Genome dynamics and diversity of Shigella species, the etiologic agents of bacillary dysentery.</title>
        <authorList>
            <person name="Yang F."/>
            <person name="Yang J."/>
            <person name="Zhang X."/>
            <person name="Chen L."/>
            <person name="Jiang Y."/>
            <person name="Yan Y."/>
            <person name="Tang X."/>
            <person name="Wang J."/>
            <person name="Xiong Z."/>
            <person name="Dong J."/>
            <person name="Xue Y."/>
            <person name="Zhu Y."/>
            <person name="Xu X."/>
            <person name="Sun L."/>
            <person name="Chen S."/>
            <person name="Nie H."/>
            <person name="Peng J."/>
            <person name="Xu J."/>
            <person name="Wang Y."/>
            <person name="Yuan Z."/>
            <person name="Wen Y."/>
            <person name="Yao Z."/>
            <person name="Shen Y."/>
            <person name="Qiang B."/>
            <person name="Hou Y."/>
            <person name="Yu J."/>
            <person name="Jin Q."/>
        </authorList>
    </citation>
    <scope>NUCLEOTIDE SEQUENCE [LARGE SCALE GENOMIC DNA]</scope>
    <source>
        <strain>Sd197</strain>
    </source>
</reference>
<evidence type="ECO:0000255" key="1">
    <source>
        <dbReference type="HAMAP-Rule" id="MF_00387"/>
    </source>
</evidence>